<proteinExistence type="inferred from homology"/>
<protein>
    <recommendedName>
        <fullName evidence="1">Large ribosomal subunit protein uL29</fullName>
    </recommendedName>
    <alternativeName>
        <fullName evidence="2">50S ribosomal protein L29</fullName>
    </alternativeName>
</protein>
<accession>Q0I097</accession>
<comment type="similarity">
    <text evidence="1">Belongs to the universal ribosomal protein uL29 family.</text>
</comment>
<dbReference type="EMBL" id="CP000444">
    <property type="protein sequence ID" value="ABI41208.1"/>
    <property type="molecule type" value="Genomic_DNA"/>
</dbReference>
<dbReference type="SMR" id="Q0I097"/>
<dbReference type="KEGG" id="shm:Shewmr7_0202"/>
<dbReference type="HOGENOM" id="CLU_158491_1_2_6"/>
<dbReference type="GO" id="GO:0022625">
    <property type="term" value="C:cytosolic large ribosomal subunit"/>
    <property type="evidence" value="ECO:0007669"/>
    <property type="project" value="TreeGrafter"/>
</dbReference>
<dbReference type="GO" id="GO:0003735">
    <property type="term" value="F:structural constituent of ribosome"/>
    <property type="evidence" value="ECO:0007669"/>
    <property type="project" value="InterPro"/>
</dbReference>
<dbReference type="GO" id="GO:0006412">
    <property type="term" value="P:translation"/>
    <property type="evidence" value="ECO:0007669"/>
    <property type="project" value="UniProtKB-UniRule"/>
</dbReference>
<dbReference type="CDD" id="cd00427">
    <property type="entry name" value="Ribosomal_L29_HIP"/>
    <property type="match status" value="1"/>
</dbReference>
<dbReference type="FunFam" id="1.10.287.310:FF:000001">
    <property type="entry name" value="50S ribosomal protein L29"/>
    <property type="match status" value="1"/>
</dbReference>
<dbReference type="Gene3D" id="1.10.287.310">
    <property type="match status" value="1"/>
</dbReference>
<dbReference type="HAMAP" id="MF_00374">
    <property type="entry name" value="Ribosomal_uL29"/>
    <property type="match status" value="1"/>
</dbReference>
<dbReference type="InterPro" id="IPR050063">
    <property type="entry name" value="Ribosomal_protein_uL29"/>
</dbReference>
<dbReference type="InterPro" id="IPR001854">
    <property type="entry name" value="Ribosomal_uL29"/>
</dbReference>
<dbReference type="InterPro" id="IPR018254">
    <property type="entry name" value="Ribosomal_uL29_CS"/>
</dbReference>
<dbReference type="InterPro" id="IPR036049">
    <property type="entry name" value="Ribosomal_uL29_sf"/>
</dbReference>
<dbReference type="NCBIfam" id="TIGR00012">
    <property type="entry name" value="L29"/>
    <property type="match status" value="1"/>
</dbReference>
<dbReference type="PANTHER" id="PTHR10916">
    <property type="entry name" value="60S RIBOSOMAL PROTEIN L35/50S RIBOSOMAL PROTEIN L29"/>
    <property type="match status" value="1"/>
</dbReference>
<dbReference type="PANTHER" id="PTHR10916:SF0">
    <property type="entry name" value="LARGE RIBOSOMAL SUBUNIT PROTEIN UL29C"/>
    <property type="match status" value="1"/>
</dbReference>
<dbReference type="Pfam" id="PF00831">
    <property type="entry name" value="Ribosomal_L29"/>
    <property type="match status" value="1"/>
</dbReference>
<dbReference type="SUPFAM" id="SSF46561">
    <property type="entry name" value="Ribosomal protein L29 (L29p)"/>
    <property type="match status" value="1"/>
</dbReference>
<dbReference type="PROSITE" id="PS00579">
    <property type="entry name" value="RIBOSOMAL_L29"/>
    <property type="match status" value="1"/>
</dbReference>
<organism>
    <name type="scientific">Shewanella sp. (strain MR-7)</name>
    <dbReference type="NCBI Taxonomy" id="60481"/>
    <lineage>
        <taxon>Bacteria</taxon>
        <taxon>Pseudomonadati</taxon>
        <taxon>Pseudomonadota</taxon>
        <taxon>Gammaproteobacteria</taxon>
        <taxon>Alteromonadales</taxon>
        <taxon>Shewanellaceae</taxon>
        <taxon>Shewanella</taxon>
    </lineage>
</organism>
<gene>
    <name evidence="1" type="primary">rpmC</name>
    <name type="ordered locus">Shewmr7_0202</name>
</gene>
<reference key="1">
    <citation type="submission" date="2006-08" db="EMBL/GenBank/DDBJ databases">
        <title>Complete sequence of chromosome 1 of Shewanella sp. MR-7.</title>
        <authorList>
            <person name="Copeland A."/>
            <person name="Lucas S."/>
            <person name="Lapidus A."/>
            <person name="Barry K."/>
            <person name="Detter J.C."/>
            <person name="Glavina del Rio T."/>
            <person name="Hammon N."/>
            <person name="Israni S."/>
            <person name="Dalin E."/>
            <person name="Tice H."/>
            <person name="Pitluck S."/>
            <person name="Kiss H."/>
            <person name="Brettin T."/>
            <person name="Bruce D."/>
            <person name="Han C."/>
            <person name="Tapia R."/>
            <person name="Gilna P."/>
            <person name="Schmutz J."/>
            <person name="Larimer F."/>
            <person name="Land M."/>
            <person name="Hauser L."/>
            <person name="Kyrpides N."/>
            <person name="Mikhailova N."/>
            <person name="Nealson K."/>
            <person name="Konstantinidis K."/>
            <person name="Klappenbach J."/>
            <person name="Tiedje J."/>
            <person name="Richardson P."/>
        </authorList>
    </citation>
    <scope>NUCLEOTIDE SEQUENCE [LARGE SCALE GENOMIC DNA]</scope>
    <source>
        <strain>MR-7</strain>
    </source>
</reference>
<sequence>MKASELREKSVEELNAELLGLLREQFNLRMQHATGQLTQTHQLKLVRRNIARVKTIITSKAGA</sequence>
<feature type="chain" id="PRO_1000007604" description="Large ribosomal subunit protein uL29">
    <location>
        <begin position="1"/>
        <end position="63"/>
    </location>
</feature>
<name>RL29_SHESR</name>
<keyword id="KW-0687">Ribonucleoprotein</keyword>
<keyword id="KW-0689">Ribosomal protein</keyword>
<evidence type="ECO:0000255" key="1">
    <source>
        <dbReference type="HAMAP-Rule" id="MF_00374"/>
    </source>
</evidence>
<evidence type="ECO:0000305" key="2"/>